<comment type="function">
    <text evidence="1">Binds as a heterodimer with protein bS6 to the central domain of the 16S rRNA, where it helps stabilize the platform of the 30S subunit.</text>
</comment>
<comment type="subunit">
    <text evidence="1">Part of the 30S ribosomal subunit. Forms a tight heterodimer with protein bS6.</text>
</comment>
<comment type="similarity">
    <text evidence="1">Belongs to the bacterial ribosomal protein bS18 family.</text>
</comment>
<organism>
    <name type="scientific">Polynucleobacter asymbioticus (strain DSM 18221 / CIP 109841 / QLW-P1DMWA-1)</name>
    <name type="common">Polynucleobacter necessarius subsp. asymbioticus</name>
    <dbReference type="NCBI Taxonomy" id="312153"/>
    <lineage>
        <taxon>Bacteria</taxon>
        <taxon>Pseudomonadati</taxon>
        <taxon>Pseudomonadota</taxon>
        <taxon>Betaproteobacteria</taxon>
        <taxon>Burkholderiales</taxon>
        <taxon>Burkholderiaceae</taxon>
        <taxon>Polynucleobacter</taxon>
    </lineage>
</organism>
<feature type="chain" id="PRO_1000078707" description="Small ribosomal subunit protein bS18">
    <location>
        <begin position="1"/>
        <end position="90"/>
    </location>
</feature>
<gene>
    <name evidence="1" type="primary">rpsR</name>
    <name type="ordered locus">Pnuc_0422</name>
</gene>
<sequence length="90" mass="10463">MAFGKKPDFKKKPAQNPLFKRKRYCRFTVAGVEQIDYKDVDTLKDFIGENAKITPARLTGTKAKYQRQLDTAIKRARYLALLPFSDQHKK</sequence>
<proteinExistence type="inferred from homology"/>
<evidence type="ECO:0000255" key="1">
    <source>
        <dbReference type="HAMAP-Rule" id="MF_00270"/>
    </source>
</evidence>
<evidence type="ECO:0000305" key="2"/>
<protein>
    <recommendedName>
        <fullName evidence="1">Small ribosomal subunit protein bS18</fullName>
    </recommendedName>
    <alternativeName>
        <fullName evidence="2">30S ribosomal protein S18</fullName>
    </alternativeName>
</protein>
<reference key="1">
    <citation type="journal article" date="2012" name="Stand. Genomic Sci.">
        <title>Complete genome sequence of Polynucleobacter necessarius subsp. asymbioticus type strain (QLW-P1DMWA-1(T)).</title>
        <authorList>
            <person name="Meincke L."/>
            <person name="Copeland A."/>
            <person name="Lapidus A."/>
            <person name="Lucas S."/>
            <person name="Berry K.W."/>
            <person name="Del Rio T.G."/>
            <person name="Hammon N."/>
            <person name="Dalin E."/>
            <person name="Tice H."/>
            <person name="Pitluck S."/>
            <person name="Richardson P."/>
            <person name="Bruce D."/>
            <person name="Goodwin L."/>
            <person name="Han C."/>
            <person name="Tapia R."/>
            <person name="Detter J.C."/>
            <person name="Schmutz J."/>
            <person name="Brettin T."/>
            <person name="Larimer F."/>
            <person name="Land M."/>
            <person name="Hauser L."/>
            <person name="Kyrpides N.C."/>
            <person name="Ivanova N."/>
            <person name="Goker M."/>
            <person name="Woyke T."/>
            <person name="Wu Q.L."/>
            <person name="Pockl M."/>
            <person name="Hahn M.W."/>
            <person name="Klenk H.P."/>
        </authorList>
    </citation>
    <scope>NUCLEOTIDE SEQUENCE [LARGE SCALE GENOMIC DNA]</scope>
    <source>
        <strain>DSM 18221 / CIP 109841 / QLW-P1DMWA-1</strain>
    </source>
</reference>
<dbReference type="EMBL" id="CP000655">
    <property type="protein sequence ID" value="ABP33642.1"/>
    <property type="molecule type" value="Genomic_DNA"/>
</dbReference>
<dbReference type="RefSeq" id="WP_011902267.1">
    <property type="nucleotide sequence ID" value="NC_009379.1"/>
</dbReference>
<dbReference type="SMR" id="A4SVX8"/>
<dbReference type="GeneID" id="31480775"/>
<dbReference type="KEGG" id="pnu:Pnuc_0422"/>
<dbReference type="eggNOG" id="COG0238">
    <property type="taxonomic scope" value="Bacteria"/>
</dbReference>
<dbReference type="HOGENOM" id="CLU_148710_0_3_4"/>
<dbReference type="Proteomes" id="UP000000231">
    <property type="component" value="Chromosome"/>
</dbReference>
<dbReference type="GO" id="GO:0022627">
    <property type="term" value="C:cytosolic small ribosomal subunit"/>
    <property type="evidence" value="ECO:0007669"/>
    <property type="project" value="TreeGrafter"/>
</dbReference>
<dbReference type="GO" id="GO:0070181">
    <property type="term" value="F:small ribosomal subunit rRNA binding"/>
    <property type="evidence" value="ECO:0007669"/>
    <property type="project" value="TreeGrafter"/>
</dbReference>
<dbReference type="GO" id="GO:0003735">
    <property type="term" value="F:structural constituent of ribosome"/>
    <property type="evidence" value="ECO:0007669"/>
    <property type="project" value="InterPro"/>
</dbReference>
<dbReference type="GO" id="GO:0006412">
    <property type="term" value="P:translation"/>
    <property type="evidence" value="ECO:0007669"/>
    <property type="project" value="UniProtKB-UniRule"/>
</dbReference>
<dbReference type="Gene3D" id="4.10.640.10">
    <property type="entry name" value="Ribosomal protein S18"/>
    <property type="match status" value="1"/>
</dbReference>
<dbReference type="HAMAP" id="MF_00270">
    <property type="entry name" value="Ribosomal_bS18"/>
    <property type="match status" value="1"/>
</dbReference>
<dbReference type="InterPro" id="IPR001648">
    <property type="entry name" value="Ribosomal_bS18"/>
</dbReference>
<dbReference type="InterPro" id="IPR018275">
    <property type="entry name" value="Ribosomal_bS18_CS"/>
</dbReference>
<dbReference type="InterPro" id="IPR036870">
    <property type="entry name" value="Ribosomal_bS18_sf"/>
</dbReference>
<dbReference type="NCBIfam" id="TIGR00165">
    <property type="entry name" value="S18"/>
    <property type="match status" value="1"/>
</dbReference>
<dbReference type="PANTHER" id="PTHR13479">
    <property type="entry name" value="30S RIBOSOMAL PROTEIN S18"/>
    <property type="match status" value="1"/>
</dbReference>
<dbReference type="PANTHER" id="PTHR13479:SF40">
    <property type="entry name" value="SMALL RIBOSOMAL SUBUNIT PROTEIN BS18M"/>
    <property type="match status" value="1"/>
</dbReference>
<dbReference type="Pfam" id="PF01084">
    <property type="entry name" value="Ribosomal_S18"/>
    <property type="match status" value="1"/>
</dbReference>
<dbReference type="PRINTS" id="PR00974">
    <property type="entry name" value="RIBOSOMALS18"/>
</dbReference>
<dbReference type="SUPFAM" id="SSF46911">
    <property type="entry name" value="Ribosomal protein S18"/>
    <property type="match status" value="1"/>
</dbReference>
<dbReference type="PROSITE" id="PS00057">
    <property type="entry name" value="RIBOSOMAL_S18"/>
    <property type="match status" value="1"/>
</dbReference>
<name>RS18_POLAQ</name>
<accession>A4SVX8</accession>
<keyword id="KW-1185">Reference proteome</keyword>
<keyword id="KW-0687">Ribonucleoprotein</keyword>
<keyword id="KW-0689">Ribosomal protein</keyword>
<keyword id="KW-0694">RNA-binding</keyword>
<keyword id="KW-0699">rRNA-binding</keyword>